<sequence length="333" mass="37611">MELIVKEESKTDYNYGSDPYNRDIKTLLNTGLVVIDKPSGPTSHEVAAWVRNMLNLVKAGHGGTLDPKVTGALPVALGNTTKCVPIWHIPPKEYVCLMHLHDDAKVEDIENIFKEFTGRIHQRPPLKAAVKRSLRIRKIYEIEILEIDGRDILFRTKCQSGTYLRKLVDDMGEALGTSAHMQELRRTISGPFYENEAVYLQDLLDAYIFWKEDGNEEELRKLVKPLEYGLQHLKKIIVKDSAVDAVCHGATLYSSGVSKIEKGIGTDEVVLIETLKGEAVAVGKPLMNTKDMLKTEEGEVVEITRVIMEPGIYPRIWKKRNKNDKTKAESKKK</sequence>
<gene>
    <name evidence="1" type="primary">truB</name>
    <name type="ordered locus">MmarC5_1720</name>
</gene>
<evidence type="ECO:0000255" key="1">
    <source>
        <dbReference type="HAMAP-Rule" id="MF_01081"/>
    </source>
</evidence>
<comment type="function">
    <text evidence="1">Could be responsible for synthesis of pseudouridine from uracil-55 in the psi GC loop of transfer RNAs.</text>
</comment>
<comment type="catalytic activity">
    <reaction evidence="1">
        <text>uridine(55) in tRNA = pseudouridine(55) in tRNA</text>
        <dbReference type="Rhea" id="RHEA:42532"/>
        <dbReference type="Rhea" id="RHEA-COMP:10101"/>
        <dbReference type="Rhea" id="RHEA-COMP:10102"/>
        <dbReference type="ChEBI" id="CHEBI:65314"/>
        <dbReference type="ChEBI" id="CHEBI:65315"/>
        <dbReference type="EC" id="5.4.99.25"/>
    </reaction>
</comment>
<comment type="similarity">
    <text evidence="1">Belongs to the pseudouridine synthase TruB family. Type 2 subfamily.</text>
</comment>
<proteinExistence type="inferred from homology"/>
<accession>A4G0N3</accession>
<feature type="chain" id="PRO_1000084722" description="Probable tRNA pseudouridine synthase B">
    <location>
        <begin position="1"/>
        <end position="333"/>
    </location>
</feature>
<feature type="domain" description="PUA" evidence="1">
    <location>
        <begin position="233"/>
        <end position="308"/>
    </location>
</feature>
<feature type="active site" description="Nucleophile" evidence="1">
    <location>
        <position position="66"/>
    </location>
</feature>
<dbReference type="EC" id="5.4.99.25" evidence="1"/>
<dbReference type="EMBL" id="CP000609">
    <property type="protein sequence ID" value="ABO36017.1"/>
    <property type="molecule type" value="Genomic_DNA"/>
</dbReference>
<dbReference type="RefSeq" id="WP_011869463.1">
    <property type="nucleotide sequence ID" value="NC_009135.1"/>
</dbReference>
<dbReference type="SMR" id="A4G0N3"/>
<dbReference type="STRING" id="402880.MmarC5_1720"/>
<dbReference type="GeneID" id="4928028"/>
<dbReference type="KEGG" id="mmq:MmarC5_1720"/>
<dbReference type="eggNOG" id="arCOG00987">
    <property type="taxonomic scope" value="Archaea"/>
</dbReference>
<dbReference type="HOGENOM" id="CLU_032087_3_0_2"/>
<dbReference type="OrthoDB" id="35866at2157"/>
<dbReference type="Proteomes" id="UP000000253">
    <property type="component" value="Chromosome"/>
</dbReference>
<dbReference type="GO" id="GO:0003723">
    <property type="term" value="F:RNA binding"/>
    <property type="evidence" value="ECO:0007669"/>
    <property type="project" value="InterPro"/>
</dbReference>
<dbReference type="GO" id="GO:0160148">
    <property type="term" value="F:tRNA pseudouridine(55) synthase activity"/>
    <property type="evidence" value="ECO:0007669"/>
    <property type="project" value="UniProtKB-EC"/>
</dbReference>
<dbReference type="GO" id="GO:0000495">
    <property type="term" value="P:box H/ACA sno(s)RNA 3'-end processing"/>
    <property type="evidence" value="ECO:0007669"/>
    <property type="project" value="TreeGrafter"/>
</dbReference>
<dbReference type="GO" id="GO:1990481">
    <property type="term" value="P:mRNA pseudouridine synthesis"/>
    <property type="evidence" value="ECO:0007669"/>
    <property type="project" value="TreeGrafter"/>
</dbReference>
<dbReference type="GO" id="GO:0031118">
    <property type="term" value="P:rRNA pseudouridine synthesis"/>
    <property type="evidence" value="ECO:0007669"/>
    <property type="project" value="TreeGrafter"/>
</dbReference>
<dbReference type="GO" id="GO:0031120">
    <property type="term" value="P:snRNA pseudouridine synthesis"/>
    <property type="evidence" value="ECO:0007669"/>
    <property type="project" value="TreeGrafter"/>
</dbReference>
<dbReference type="GO" id="GO:0031119">
    <property type="term" value="P:tRNA pseudouridine synthesis"/>
    <property type="evidence" value="ECO:0007669"/>
    <property type="project" value="UniProtKB-UniRule"/>
</dbReference>
<dbReference type="CDD" id="cd02572">
    <property type="entry name" value="PseudoU_synth_hDyskerin"/>
    <property type="match status" value="1"/>
</dbReference>
<dbReference type="CDD" id="cd21148">
    <property type="entry name" value="PUA_Cbf5"/>
    <property type="match status" value="1"/>
</dbReference>
<dbReference type="FunFam" id="3.30.2350.10:FF:000001">
    <property type="entry name" value="H/ACA ribonucleoprotein complex subunit CBF5"/>
    <property type="match status" value="1"/>
</dbReference>
<dbReference type="Gene3D" id="3.30.2350.10">
    <property type="entry name" value="Pseudouridine synthase"/>
    <property type="match status" value="1"/>
</dbReference>
<dbReference type="Gene3D" id="2.30.130.10">
    <property type="entry name" value="PUA domain"/>
    <property type="match status" value="1"/>
</dbReference>
<dbReference type="HAMAP" id="MF_01081">
    <property type="entry name" value="TruB_arch"/>
    <property type="match status" value="1"/>
</dbReference>
<dbReference type="InterPro" id="IPR012960">
    <property type="entry name" value="Dyskerin-like"/>
</dbReference>
<dbReference type="InterPro" id="IPR020103">
    <property type="entry name" value="PsdUridine_synth_cat_dom_sf"/>
</dbReference>
<dbReference type="InterPro" id="IPR002501">
    <property type="entry name" value="PsdUridine_synth_N"/>
</dbReference>
<dbReference type="InterPro" id="IPR002478">
    <property type="entry name" value="PUA"/>
</dbReference>
<dbReference type="InterPro" id="IPR015947">
    <property type="entry name" value="PUA-like_sf"/>
</dbReference>
<dbReference type="InterPro" id="IPR036974">
    <property type="entry name" value="PUA_sf"/>
</dbReference>
<dbReference type="InterPro" id="IPR004802">
    <property type="entry name" value="tRNA_PsdUridine_synth_B_fam"/>
</dbReference>
<dbReference type="InterPro" id="IPR026326">
    <property type="entry name" value="TruB_arch"/>
</dbReference>
<dbReference type="InterPro" id="IPR032819">
    <property type="entry name" value="TruB_C"/>
</dbReference>
<dbReference type="InterPro" id="IPR004521">
    <property type="entry name" value="Uncharacterised_CHP00451"/>
</dbReference>
<dbReference type="NCBIfam" id="TIGR00425">
    <property type="entry name" value="CBF5"/>
    <property type="match status" value="1"/>
</dbReference>
<dbReference type="NCBIfam" id="NF003280">
    <property type="entry name" value="PRK04270.1"/>
    <property type="match status" value="1"/>
</dbReference>
<dbReference type="NCBIfam" id="TIGR00451">
    <property type="entry name" value="unchar_dom_2"/>
    <property type="match status" value="1"/>
</dbReference>
<dbReference type="PANTHER" id="PTHR23127">
    <property type="entry name" value="CENTROMERE/MICROTUBULE BINDING PROTEIN CBF5"/>
    <property type="match status" value="1"/>
</dbReference>
<dbReference type="PANTHER" id="PTHR23127:SF0">
    <property type="entry name" value="H_ACA RIBONUCLEOPROTEIN COMPLEX SUBUNIT DKC1"/>
    <property type="match status" value="1"/>
</dbReference>
<dbReference type="Pfam" id="PF08068">
    <property type="entry name" value="DKCLD"/>
    <property type="match status" value="1"/>
</dbReference>
<dbReference type="Pfam" id="PF01472">
    <property type="entry name" value="PUA"/>
    <property type="match status" value="1"/>
</dbReference>
<dbReference type="Pfam" id="PF16198">
    <property type="entry name" value="TruB_C_2"/>
    <property type="match status" value="1"/>
</dbReference>
<dbReference type="Pfam" id="PF01509">
    <property type="entry name" value="TruB_N"/>
    <property type="match status" value="1"/>
</dbReference>
<dbReference type="SMART" id="SM01136">
    <property type="entry name" value="DKCLD"/>
    <property type="match status" value="1"/>
</dbReference>
<dbReference type="SMART" id="SM00359">
    <property type="entry name" value="PUA"/>
    <property type="match status" value="1"/>
</dbReference>
<dbReference type="SUPFAM" id="SSF55120">
    <property type="entry name" value="Pseudouridine synthase"/>
    <property type="match status" value="1"/>
</dbReference>
<dbReference type="SUPFAM" id="SSF88697">
    <property type="entry name" value="PUA domain-like"/>
    <property type="match status" value="1"/>
</dbReference>
<dbReference type="PROSITE" id="PS50890">
    <property type="entry name" value="PUA"/>
    <property type="match status" value="1"/>
</dbReference>
<organism>
    <name type="scientific">Methanococcus maripaludis (strain C5 / ATCC BAA-1333)</name>
    <dbReference type="NCBI Taxonomy" id="402880"/>
    <lineage>
        <taxon>Archaea</taxon>
        <taxon>Methanobacteriati</taxon>
        <taxon>Methanobacteriota</taxon>
        <taxon>Methanomada group</taxon>
        <taxon>Methanococci</taxon>
        <taxon>Methanococcales</taxon>
        <taxon>Methanococcaceae</taxon>
        <taxon>Methanococcus</taxon>
    </lineage>
</organism>
<name>TRUB_METM5</name>
<keyword id="KW-0413">Isomerase</keyword>
<keyword id="KW-0819">tRNA processing</keyword>
<protein>
    <recommendedName>
        <fullName evidence="1">Probable tRNA pseudouridine synthase B</fullName>
        <ecNumber evidence="1">5.4.99.25</ecNumber>
    </recommendedName>
    <alternativeName>
        <fullName evidence="1">tRNA pseudouridine(55) synthase</fullName>
        <shortName evidence="1">Psi55 synthase</shortName>
    </alternativeName>
    <alternativeName>
        <fullName evidence="1">tRNA pseudouridylate synthase</fullName>
    </alternativeName>
    <alternativeName>
        <fullName evidence="1">tRNA-uridine isomerase</fullName>
    </alternativeName>
</protein>
<reference key="1">
    <citation type="submission" date="2007-03" db="EMBL/GenBank/DDBJ databases">
        <title>Complete sequence of chromosome of Methanococcus maripaludis C5.</title>
        <authorList>
            <consortium name="US DOE Joint Genome Institute"/>
            <person name="Copeland A."/>
            <person name="Lucas S."/>
            <person name="Lapidus A."/>
            <person name="Barry K."/>
            <person name="Glavina del Rio T."/>
            <person name="Dalin E."/>
            <person name="Tice H."/>
            <person name="Pitluck S."/>
            <person name="Chertkov O."/>
            <person name="Brettin T."/>
            <person name="Bruce D."/>
            <person name="Han C."/>
            <person name="Detter J.C."/>
            <person name="Schmutz J."/>
            <person name="Larimer F."/>
            <person name="Land M."/>
            <person name="Hauser L."/>
            <person name="Kyrpides N."/>
            <person name="Mikhailova N."/>
            <person name="Sieprawska-Lupa M."/>
            <person name="Whitman W.B."/>
            <person name="Richardson P."/>
        </authorList>
    </citation>
    <scope>NUCLEOTIDE SEQUENCE [LARGE SCALE GENOMIC DNA]</scope>
    <source>
        <strain>C5 / ATCC BAA-1333</strain>
    </source>
</reference>